<gene>
    <name type="primary">ompA</name>
    <name type="ordered locus">RC1273</name>
</gene>
<sequence length="2021" mass="203330">MANISPKLFQKAIQQGLKAALFTTSTAAIMLSSSGALGIAVSGVIATNNNAAFSDNVGNNWNEITAAGVANGTPARGPQNNWAFTYGGDYTITADVADHIITAINVADTTPIGLNIAQNTVVGSIVTGGNLLPVTITAGKSLTLNGNNADAANHGFGAPADNYTGLGNIALGGANAALIIQSAAPAKITLAGNINGGGIITVKTDAAINGTIGNTNALATVNVGAGIATLEGAIIKATTTKLTNAASVLTLTNVNAVLTGAIDNTTGVDNVGVLNLNGALSQVTGNIGNTNALATISVGAGKATLGGAVIKATTTKLTDNASAVTFTNPVVVTGAIDNTGNANNGIVTFTGDSTVTGNIGNTNALATISVGAGKATLGGAIIKATTTKLTDNASAVTFTNPVVVTGAIDNTGNANNGIVTFTGDSTVTGNIGNTNALATISVGAGKATLGGAIIKATTTKLTDNASAVTFTNPVVVTGAIDNTGNANNGIVTFTGDSTVTGNIGNTNALATISVGAGKATLGGAIIKATTTKLTDNASAVTFTNPVVVTGAIDNTGNANNGIVTFTGDSTVTGNIGNTNALATISVGAGKATLGGAIIKATTTKLTDNASAVTFTNPVVVTGAIDNTGNANNGIVTFTGNSTVTGNIGNTNALATVNVGAGIATLEGAVIKATTTKLTNAASVLTLTNVNAVLTGAIDNTTGVDNVGVLNLNGALSQVTGNIGNTNALATISVGAGKATLGGAVIKATTTKLTDNASAVTFTNPVVVTGAIDNTGNANNGIATFTGDSTVTGNIGNTNALATVNVGAGLLRVQGGVVKSNTINLTDNASAVTFTNPVVVTGAIDNTGNANNGIVTFTGDSTVTGNIGNTNALATISVGAGKATLGGAIIKATTTKLTDNASAVTFTNPVVVTGAIDNTGNANNGIVTFTGDSTVTGNIGNTNALATVNVGAGVTLQAGGSLDANNIDFGARSTLEFNGPLDGGGNAIPYYFKGAIANGNNAILNVNTKLLTAYHLTIGTVAEINIGAGNLFAIDASAGDVTILNAQDIHFRALDSALVLSNLTGVGVNNILLAADLVAPGVDEGTVVFDGGVNGLNIGSNVAGAARNIGDVGGNKFNTLLIYNAVTITDDVNLEGIQNVLINNNADFTSSTAFNAGTIQINDATYTIDANNGNLNIPAGNIKFAHADAQLILQNSSGNDRTITLGANIDPDNDDEGIVILNSVTAGKKLTIAGGKTFGGAHKLQDIVFKGEGDFGTAGTTFNTTNIVLDITGQLELGATTANVVLFKDAVQLTQTGNIGGFLDFNAKNGTVTLNNNVNVAGTVKNTGGTNNGTLIVLGASNLNRVNGIAMLKVGAGNVTIAKGGNVKIGEIQGTGTNTLTLPAHFKLTGSINKTGGQALKLNFMNGGSVSGVVGTAANSVGDITTAGATSFASSVNAKGTATLGGTTSFAHTFTNTGAVTLAKGSITSFAKNVTATSFVANSATINFGNSLAFNSNITGSGTTLTLGANQVTYTGTGSFTDTLTLNTTFDGAAKSGGNILIKSGSTLDLSGVSNLALVVTATNFDMNNISPDTKYTVISAETAGGLKPTPKENVKITINNDNRFVDFTFDASTLTLFAEDIAAGVIDEDFAPGGPLANIPNAANIKKSLELMEDAPNGSDARQAFNNFGLMTPLQEADATTHLMQDVVKPSDTIAAVNNQVVASNISSNITALNARMDKVQAGNKGPVSSGDEDMDAKFGAWISPFVGNATQKMCNSISGYKSDTTGGTIGFDGFVSDDLVLGLAYTRADTDIKLKNNKTGDKNKVESNIYSLYGLYSVPYENLFVEAIASYSDNKIRSKSRRVIATTLETVGYQTANGKYKSESYTGQLMAGYTYMMSENINLTPLAGLRYSTIKDKSYKETGTTYQNLTVKGKNYNTFDGLLGAKVSSNINVNEIVLTPELYAMVDYAFKNKVSAIDARLQGMTAPLPTNSFKQSKTSFDVGVGVTAKHKMMEYGINYDTNIGSKYFAQQGSVKVRVNF</sequence>
<proteinExistence type="inferred from homology"/>
<name>OMPA_RICCN</name>
<comment type="function">
    <text evidence="1">Elicits protective immunity.</text>
</comment>
<comment type="subcellular location">
    <molecule>Outer membrane protein A</molecule>
    <subcellularLocation>
        <location evidence="1">Periplasm</location>
    </subcellularLocation>
</comment>
<comment type="subcellular location">
    <molecule>120 kDa surface-exposed protein</molecule>
    <subcellularLocation>
        <location evidence="1">Secreted</location>
    </subcellularLocation>
    <subcellularLocation>
        <location evidence="1">Cell surface</location>
    </subcellularLocation>
    <text>Surface exposed. This bacterium is covered by a S-layer with hexagonal symmetry.</text>
</comment>
<comment type="subcellular location">
    <molecule>32 kDa beta peptide</molecule>
    <subcellularLocation>
        <location evidence="4">Cell outer membrane</location>
        <topology evidence="4">Multi-pass membrane protein</topology>
    </subcellularLocation>
    <text>The cleaved C-terminal fragment (autotransporter domain) is localized in the outer membrane.</text>
</comment>
<comment type="PTM">
    <text evidence="1">Glycosylated.</text>
</comment>
<comment type="similarity">
    <text evidence="4">Belongs to the rickettsiae OmpA/OmpB family.</text>
</comment>
<reference key="1">
    <citation type="journal article" date="1994" name="Gene">
        <title>Sequence analysis of the 190-kDa antigen-encoding gene of Rickettsia conorii (Malish 7 strain).</title>
        <authorList>
            <person name="Crocquet-Valdes P.A."/>
            <person name="Weiss K."/>
            <person name="Walker D.H."/>
        </authorList>
    </citation>
    <scope>NUCLEOTIDE SEQUENCE [GENOMIC DNA]</scope>
    <source>
        <strain>ATCC VR-613 / Malish 7</strain>
    </source>
</reference>
<reference key="2">
    <citation type="journal article" date="2001" name="Science">
        <title>Mechanisms of evolution in Rickettsia conorii and R. prowazekii.</title>
        <authorList>
            <person name="Ogata H."/>
            <person name="Audic S."/>
            <person name="Renesto-Audiffren P."/>
            <person name="Fournier P.-E."/>
            <person name="Barbe V."/>
            <person name="Samson D."/>
            <person name="Roux V."/>
            <person name="Cossart P."/>
            <person name="Weissenbach J."/>
            <person name="Claverie J.-M."/>
            <person name="Raoult D."/>
        </authorList>
    </citation>
    <scope>NUCLEOTIDE SEQUENCE [LARGE SCALE GENOMIC DNA]</scope>
    <source>
        <strain>ATCC VR-613 / Malish 7</strain>
    </source>
</reference>
<reference key="3">
    <citation type="journal article" date="1996" name="J. Clin. Microbiol.">
        <title>Differentiation of spotted fever group rickettsiae by sequencing and analysis of restriction fragment length polymorphism of PCR-amplified DNA of the gene encoding the protein rOmpA.</title>
        <authorList>
            <person name="Roux V."/>
            <person name="Fournier P.E."/>
            <person name="Raoult D."/>
        </authorList>
    </citation>
    <scope>NUCLEOTIDE SEQUENCE [GENOMIC DNA] OF 8-204</scope>
    <source>
        <strain>ATCC VR-613 / Malish 7</strain>
        <strain>Indian tick typhus</strain>
        <strain>M1</strain>
        <strain>Moroccan</strain>
    </source>
</reference>
<reference key="4">
    <citation type="submission" date="1996-12" db="EMBL/GenBank/DDBJ databases">
        <title>Phylogenetic analysis of spotted fever group rickettsiae by study of the outer surface protein rOmpA.</title>
        <authorList>
            <person name="Raoult D."/>
            <person name="Fournier P.E."/>
            <person name="Roux V."/>
        </authorList>
    </citation>
    <scope>NUCLEOTIDE SEQUENCE [GENOMIC DNA] OF 953-2012</scope>
    <source>
        <strain>ATCC VR-613 / Malish 7</strain>
        <strain>Indian tick typhus</strain>
        <strain>M1</strain>
        <strain>Moroccan</strain>
    </source>
</reference>
<accession>Q52657</accession>
<accession>P95591</accession>
<accession>P95592</accession>
<accession>P95593</accession>
<accession>P95594</accession>
<accession>Q52667</accession>
<accession>Q52668</accession>
<accession>Q52669</accession>
<accession>Q52670</accession>
<accession>Q52674</accession>
<dbReference type="EMBL" id="U01028">
    <property type="protein sequence ID" value="AAA17405.1"/>
    <property type="molecule type" value="Unassigned_DNA"/>
</dbReference>
<dbReference type="EMBL" id="AE006914">
    <property type="protein sequence ID" value="AAL03811.1"/>
    <property type="molecule type" value="Genomic_DNA"/>
</dbReference>
<dbReference type="EMBL" id="U43794">
    <property type="protein sequence ID" value="AAB49549.1"/>
    <property type="molecule type" value="Genomic_DNA"/>
</dbReference>
<dbReference type="EMBL" id="U43798">
    <property type="protein sequence ID" value="AAB49550.1"/>
    <property type="molecule type" value="Genomic_DNA"/>
</dbReference>
<dbReference type="EMBL" id="U43806">
    <property type="protein sequence ID" value="AAB49551.1"/>
    <property type="molecule type" value="Genomic_DNA"/>
</dbReference>
<dbReference type="EMBL" id="U45244">
    <property type="protein sequence ID" value="AAB49566.1"/>
    <property type="molecule type" value="Genomic_DNA"/>
</dbReference>
<dbReference type="EMBL" id="U46918">
    <property type="protein sequence ID" value="AAA86663.1"/>
    <property type="molecule type" value="Genomic_DNA"/>
</dbReference>
<dbReference type="EMBL" id="U83440">
    <property type="protein sequence ID" value="AAC35176.1"/>
    <property type="molecule type" value="Genomic_DNA"/>
</dbReference>
<dbReference type="EMBL" id="U83443">
    <property type="protein sequence ID" value="AAC35179.1"/>
    <property type="molecule type" value="Genomic_DNA"/>
</dbReference>
<dbReference type="EMBL" id="U83448">
    <property type="protein sequence ID" value="AAC35184.1"/>
    <property type="molecule type" value="Genomic_DNA"/>
</dbReference>
<dbReference type="EMBL" id="U83453">
    <property type="protein sequence ID" value="AAC35189.1"/>
    <property type="molecule type" value="Genomic_DNA"/>
</dbReference>
<dbReference type="PIR" id="A97859">
    <property type="entry name" value="A97859"/>
</dbReference>
<dbReference type="RefSeq" id="WP_010977835.1">
    <property type="nucleotide sequence ID" value="NC_003103.1"/>
</dbReference>
<dbReference type="GeneID" id="928425"/>
<dbReference type="KEGG" id="rco:RC1273"/>
<dbReference type="PATRIC" id="fig|272944.4.peg.1464"/>
<dbReference type="HOGENOM" id="CLU_000413_0_0_5"/>
<dbReference type="Proteomes" id="UP000000816">
    <property type="component" value="Chromosome"/>
</dbReference>
<dbReference type="GO" id="GO:0009279">
    <property type="term" value="C:cell outer membrane"/>
    <property type="evidence" value="ECO:0007669"/>
    <property type="project" value="UniProtKB-SubCell"/>
</dbReference>
<dbReference type="GO" id="GO:0009986">
    <property type="term" value="C:cell surface"/>
    <property type="evidence" value="ECO:0007669"/>
    <property type="project" value="UniProtKB-SubCell"/>
</dbReference>
<dbReference type="GO" id="GO:0005576">
    <property type="term" value="C:extracellular region"/>
    <property type="evidence" value="ECO:0007669"/>
    <property type="project" value="UniProtKB-SubCell"/>
</dbReference>
<dbReference type="GO" id="GO:0042597">
    <property type="term" value="C:periplasmic space"/>
    <property type="evidence" value="ECO:0007669"/>
    <property type="project" value="UniProtKB-SubCell"/>
</dbReference>
<dbReference type="Gene3D" id="2.40.128.130">
    <property type="entry name" value="Autotransporter beta-domain"/>
    <property type="match status" value="1"/>
</dbReference>
<dbReference type="InterPro" id="IPR005546">
    <property type="entry name" value="Autotransporte_beta"/>
</dbReference>
<dbReference type="InterPro" id="IPR036709">
    <property type="entry name" value="Autotransporte_beta_dom_sf"/>
</dbReference>
<dbReference type="InterPro" id="IPR006315">
    <property type="entry name" value="OM_autotransptr_brl_dom"/>
</dbReference>
<dbReference type="NCBIfam" id="TIGR01414">
    <property type="entry name" value="autotrans_barl"/>
    <property type="match status" value="1"/>
</dbReference>
<dbReference type="Pfam" id="PF03797">
    <property type="entry name" value="Autotransporter"/>
    <property type="match status" value="1"/>
</dbReference>
<dbReference type="SMART" id="SM00869">
    <property type="entry name" value="Autotransporter"/>
    <property type="match status" value="1"/>
</dbReference>
<dbReference type="SUPFAM" id="SSF103515">
    <property type="entry name" value="Autotransporter"/>
    <property type="match status" value="1"/>
</dbReference>
<dbReference type="PROSITE" id="PS51208">
    <property type="entry name" value="AUTOTRANSPORTER"/>
    <property type="match status" value="1"/>
</dbReference>
<feature type="signal peptide" evidence="2">
    <location>
        <begin position="1"/>
        <end position="38"/>
    </location>
</feature>
<feature type="chain" id="PRO_0000032646" description="Outer membrane protein A">
    <location>
        <begin position="39"/>
        <end position="2021"/>
    </location>
</feature>
<feature type="chain" id="PRO_0000387575" description="120 kDa surface-exposed protein">
    <location>
        <begin position="39"/>
        <end status="unknown"/>
    </location>
</feature>
<feature type="chain" id="PRO_0000387576" description="32 kDa beta peptide">
    <location>
        <begin status="unknown"/>
        <end position="2021"/>
    </location>
</feature>
<feature type="domain" description="Autotransporter" evidence="3">
    <location>
        <begin position="1734"/>
        <end position="2021"/>
    </location>
</feature>
<feature type="sequence variant" description="In strain: Indian tick typhus.">
    <original>N</original>
    <variation>NN</variation>
    <location>
        <position position="60"/>
    </location>
</feature>
<feature type="sequence variant" description="In strain: Indian tick typhus.">
    <original>R</original>
    <variation>H</variation>
    <location>
        <position position="76"/>
    </location>
</feature>
<feature type="sequence variant" description="In strain: M1.">
    <location>
        <begin position="86"/>
        <end position="137"/>
    </location>
</feature>
<feature type="sequence variant" description="In strain: Moroccan.">
    <location>
        <begin position="126"/>
        <end position="133"/>
    </location>
</feature>
<feature type="sequence variant" description="In strain: Indian tick typhus.">
    <original>VT</original>
    <variation>II</variation>
    <location>
        <begin position="953"/>
        <end position="954"/>
    </location>
</feature>
<feature type="sequence variant" description="In strain: Indian tick typhus, M1 and Moroccan.">
    <original>D</original>
    <variation>A</variation>
    <location>
        <position position="1245"/>
    </location>
</feature>
<feature type="sequence variant" description="In strain: Moroccan.">
    <original>N</original>
    <variation>H</variation>
    <location>
        <position position="1308"/>
    </location>
</feature>
<feature type="sequence variant" description="In strain: Indian tick typhus.">
    <original>M</original>
    <variation>I</variation>
    <location>
        <position position="1877"/>
    </location>
</feature>
<feature type="sequence conflict" description="In Ref. 1; AAA17405." evidence="4" ref="1">
    <original>Q</original>
    <variation>K</variation>
    <location>
        <position position="10"/>
    </location>
</feature>
<feature type="sequence conflict" description="In Ref. 1; AAA17405." evidence="4" ref="1">
    <original>I</original>
    <variation>V</variation>
    <location>
        <position position="92"/>
    </location>
</feature>
<feature type="sequence conflict" description="In Ref. 1; AAA17405." evidence="4" ref="1">
    <original>V</original>
    <variation>I</variation>
    <location>
        <position position="126"/>
    </location>
</feature>
<feature type="sequence conflict" description="In Ref. 1; AAA17405." evidence="4" ref="1">
    <original>T</original>
    <variation>N</variation>
    <location>
        <position position="137"/>
    </location>
</feature>
<feature type="sequence conflict" description="In Ref. 1; AAA17405." evidence="4" ref="1">
    <original>G</original>
    <variation>D</variation>
    <location>
        <position position="157"/>
    </location>
</feature>
<feature type="sequence conflict" description="In Ref. 1; AAA17405." evidence="4" ref="1">
    <original>IS</original>
    <variation>VN</variation>
    <location>
        <begin position="368"/>
        <end position="369"/>
    </location>
</feature>
<feature type="sequence conflict" description="In Ref. 1; AAA17405." evidence="4" ref="1">
    <original>KATLGGAIIKATTTK</original>
    <variation>LLQVQGGVVKANTIN</variation>
    <location>
        <begin position="374"/>
        <end position="388"/>
    </location>
</feature>
<feature type="sequence conflict" description="In Ref. 1; AAA17405." evidence="4" ref="1">
    <original>N</original>
    <variation>D</variation>
    <location>
        <position position="640"/>
    </location>
</feature>
<feature type="sequence conflict" description="In Ref. 1; AAA17405." evidence="4" ref="1">
    <original>V</original>
    <variation>I</variation>
    <location>
        <position position="669"/>
    </location>
</feature>
<feature type="sequence conflict" description="In Ref. 1; AAA17405." evidence="4" ref="1">
    <original>N</original>
    <variation>D</variation>
    <location>
        <position position="793"/>
    </location>
</feature>
<feature type="sequence conflict" description="In Ref. 1; AAA17405." evidence="4" ref="1">
    <original>VN</original>
    <variation>IS</variation>
    <location>
        <begin position="803"/>
        <end position="804"/>
    </location>
</feature>
<feature type="sequence conflict" description="In Ref. 1; AAA17405." evidence="4" ref="1">
    <original>LLRVQGGVVKSNTIN</original>
    <variation>KATLGGAIIKATTTK</variation>
    <location>
        <begin position="809"/>
        <end position="823"/>
    </location>
</feature>
<feature type="sequence conflict" description="In Ref. 1; AAA17405." evidence="4" ref="1">
    <original>D</original>
    <variation>Y</variation>
    <location>
        <position position="898"/>
    </location>
</feature>
<feature type="sequence conflict" description="In Ref. 1; AAA17405." evidence="4" ref="1">
    <original>P</original>
    <variation>N</variation>
    <location>
        <position position="908"/>
    </location>
</feature>
<feature type="sequence conflict" description="In Ref. 1; AAA17405." evidence="4" ref="1">
    <original>N</original>
    <variation>K</variation>
    <location>
        <position position="985"/>
    </location>
</feature>
<feature type="sequence conflict" description="In Ref. 1; AAA17405." evidence="4" ref="1">
    <original>L</original>
    <variation>S</variation>
    <location>
        <position position="1009"/>
    </location>
</feature>
<feature type="sequence conflict" description="In Ref. 1; AAA17405." evidence="4" ref="1">
    <original>Y</original>
    <variation>S</variation>
    <location>
        <position position="1013"/>
    </location>
</feature>
<feature type="sequence conflict" description="In Ref. 1; AAA17405." evidence="4" ref="1">
    <original>K</original>
    <variation>Q</variation>
    <location>
        <position position="1182"/>
    </location>
</feature>
<feature type="sequence conflict" description="In Ref. 4; AAC35189." evidence="4" ref="4">
    <original>N</original>
    <variation>Y</variation>
    <location>
        <position position="1314"/>
    </location>
</feature>
<feature type="sequence conflict" description="In Ref. 1; AAA17405." evidence="4" ref="1">
    <original>H</original>
    <variation>N</variation>
    <location>
        <position position="1451"/>
    </location>
</feature>
<feature type="sequence conflict" description="In Ref. 1; AAA17405." evidence="4" ref="1">
    <original>G</original>
    <variation>D</variation>
    <location>
        <position position="1624"/>
    </location>
</feature>
<feature type="sequence conflict" description="In Ref. 1; AAA17405." evidence="4" ref="1">
    <original>E</original>
    <variation>G</variation>
    <location>
        <position position="1628"/>
    </location>
</feature>
<feature type="sequence conflict" description="In Ref. 1; AAA17405." evidence="4" ref="1">
    <original>A</original>
    <variation>V</variation>
    <location>
        <position position="1872"/>
    </location>
</feature>
<feature type="sequence conflict" description="In Ref. 1; AAA17405." evidence="4" ref="1">
    <original>T</original>
    <variation>P</variation>
    <location>
        <position position="1875"/>
    </location>
</feature>
<feature type="sequence conflict" description="In Ref. 1; AAA17405." evidence="4" ref="1">
    <original>MS</original>
    <variation>LP</variation>
    <location>
        <begin position="1878"/>
        <end position="1879"/>
    </location>
</feature>
<feature type="sequence conflict" description="In Ref. 1; AAA17405." evidence="4" ref="1">
    <original>E</original>
    <variation>A</variation>
    <location>
        <position position="1936"/>
    </location>
</feature>
<feature type="sequence conflict" description="In Ref. 1; AAA17405." evidence="4" ref="1">
    <original>MTAPLP</original>
    <variation>ITPPLS</variation>
    <location>
        <begin position="1965"/>
        <end position="1970"/>
    </location>
</feature>
<feature type="sequence conflict" description="In Ref. 1; AAA17405." evidence="4" ref="1">
    <original>G</original>
    <variation>R</variation>
    <location>
        <position position="1997"/>
    </location>
</feature>
<evidence type="ECO:0000250" key="1"/>
<evidence type="ECO:0000255" key="2"/>
<evidence type="ECO:0000255" key="3">
    <source>
        <dbReference type="PROSITE-ProRule" id="PRU00556"/>
    </source>
</evidence>
<evidence type="ECO:0000305" key="4"/>
<protein>
    <recommendedName>
        <fullName>Outer membrane protein A</fullName>
    </recommendedName>
    <alternativeName>
        <fullName>190 kDa antigen</fullName>
    </alternativeName>
    <alternativeName>
        <fullName>Cell surface antigen</fullName>
    </alternativeName>
    <alternativeName>
        <fullName>rOmp A</fullName>
        <shortName>rOmpA</shortName>
    </alternativeName>
    <component>
        <recommendedName>
            <fullName>120 kDa surface-exposed protein</fullName>
        </recommendedName>
        <alternativeName>
            <fullName>120 kDa outer membrane protein OmpA</fullName>
        </alternativeName>
    </component>
    <component>
        <recommendedName>
            <fullName>32 kDa beta peptide</fullName>
        </recommendedName>
    </component>
</protein>
<keyword id="KW-0998">Cell outer membrane</keyword>
<keyword id="KW-0325">Glycoprotein</keyword>
<keyword id="KW-0472">Membrane</keyword>
<keyword id="KW-0574">Periplasm</keyword>
<keyword id="KW-0677">Repeat</keyword>
<keyword id="KW-0964">Secreted</keyword>
<keyword id="KW-0732">Signal</keyword>
<keyword id="KW-0812">Transmembrane</keyword>
<keyword id="KW-1134">Transmembrane beta strand</keyword>
<organism>
    <name type="scientific">Rickettsia conorii (strain ATCC VR-613 / Malish 7)</name>
    <dbReference type="NCBI Taxonomy" id="272944"/>
    <lineage>
        <taxon>Bacteria</taxon>
        <taxon>Pseudomonadati</taxon>
        <taxon>Pseudomonadota</taxon>
        <taxon>Alphaproteobacteria</taxon>
        <taxon>Rickettsiales</taxon>
        <taxon>Rickettsiaceae</taxon>
        <taxon>Rickettsieae</taxon>
        <taxon>Rickettsia</taxon>
        <taxon>spotted fever group</taxon>
    </lineage>
</organism>